<reference key="1">
    <citation type="journal article" date="1990" name="Nucleic Acids Res.">
        <title>Nucleotide sequence of Xenopus laevis Oct-1 cDNA.</title>
        <authorList>
            <person name="Smith D.P."/>
            <person name="Old R.W."/>
        </authorList>
    </citation>
    <scope>NUCLEOTIDE SEQUENCE [MRNA] (ISOFORM 2)</scope>
    <source>
        <tissue>Oocyte</tissue>
    </source>
</reference>
<reference key="2">
    <citation type="submission" date="1991-01" db="EMBL/GenBank/DDBJ databases">
        <title>Regulated binding specificity of Xenopus OCT-1, a maternal transcription factor.</title>
        <authorList>
            <person name="Hinkley C."/>
            <person name="Leibham D."/>
            <person name="Perry M."/>
        </authorList>
    </citation>
    <scope>NUCLEOTIDE SEQUENCE [MRNA] (ISOFORM 1)</scope>
</reference>
<reference key="3">
    <citation type="submission" date="1990-02" db="EMBL/GenBank/DDBJ databases">
        <authorList>
            <person name="Schilthuis J.G."/>
            <person name="Baarends W.M."/>
            <person name="Peterson-Maduro J."/>
            <person name="Destre O.H.J."/>
        </authorList>
    </citation>
    <scope>NUCLEOTIDE SEQUENCE [GENOMIC DNA] OF 261-335</scope>
</reference>
<reference key="4">
    <citation type="journal article" date="1990" name="Nucleic Acids Res.">
        <title>Cloning and sequencing of POU-boxes expressed in Xenopus laevis neurula embryos.</title>
        <authorList>
            <person name="Baltzinger M."/>
            <person name="Stiegler P."/>
            <person name="Remy P."/>
        </authorList>
    </citation>
    <scope>NUCLEOTIDE SEQUENCE [MRNA] OF 320-433 (ISOFORM 2)</scope>
    <source>
        <tissue>Neurula</tissue>
    </source>
</reference>
<reference key="5">
    <citation type="journal article" date="1991" name="Mol. Cell. Biol.">
        <title>A variant octamer motif in a Xenopus H2B histone gene promoter is not required for transcription in frog oocytes.</title>
        <authorList>
            <person name="Hinkley C."/>
            <person name="Perry M."/>
        </authorList>
    </citation>
    <scope>FUNCTION</scope>
</reference>
<reference key="6">
    <citation type="journal article" date="1991" name="Nucleic Acids Res.">
        <title>Xenopus laevis Oct-1 does not bind to certain histone H2B gene promoter octamer motifs for which a novel octamer-binding factor has high affinity.</title>
        <authorList>
            <person name="Smith D.P."/>
            <person name="Old R.W."/>
        </authorList>
    </citation>
    <scope>FUNCTION</scope>
    <scope>SUBCELLULAR LOCATION</scope>
    <scope>TISSUE SPECIFICITY</scope>
</reference>
<reference key="7">
    <citation type="journal article" date="1992" name="Mol. Cell. Biol.">
        <title>Sequential expression of multiple POU proteins during amphibian early development.</title>
        <authorList>
            <person name="Hinkley C.S."/>
            <person name="Martin J.F."/>
            <person name="Leibham D."/>
            <person name="Perry M."/>
        </authorList>
    </citation>
    <scope>FUNCTION</scope>
    <scope>DEVELOPMENTAL STAGE</scope>
</reference>
<reference key="8">
    <citation type="journal article" date="1992" name="Mol. Cell. Biol.">
        <title>Histone H2B gene transcription during Xenopus early development requires functional cooperation between proteins bound to the CCAAT and octamer motifs.</title>
        <authorList>
            <person name="Hinkley C."/>
            <person name="Perry M."/>
        </authorList>
    </citation>
    <scope>FUNCTION</scope>
</reference>
<reference key="9">
    <citation type="journal article" date="1995" name="Mech. Dev.">
        <title>Dynamic and differential Oct-1 expression during early Xenopus embryogenesis: persistence of Oct-1 protein following down-regulation of the RNA.</title>
        <authorList>
            <person name="Veenstra G.J."/>
            <person name="Beumer T.L."/>
            <person name="Peterson-Maduro J."/>
            <person name="Stegeman B.I."/>
            <person name="Karg H.A."/>
            <person name="van der Vliet P.C."/>
            <person name="Destree O.H."/>
        </authorList>
    </citation>
    <scope>SUBCELLULAR LOCATION</scope>
    <scope>TISSUE SPECIFICITY</scope>
    <scope>DEVELOPMENTAL STAGE</scope>
</reference>
<reference key="10">
    <citation type="journal article" date="1998" name="Cell Death Differ.">
        <title>Non-cell autonomous induction of apoptosis and loss of posterior structures by activation domain-specific interactions of Oct-1 in the Xenopus embryo.</title>
        <authorList>
            <person name="Veenstra G.J."/>
            <person name="Peterson-Maduro J."/>
            <person name="Mathu M.T."/>
            <person name="van der Vliet P.C."/>
            <person name="Destree O.H."/>
        </authorList>
    </citation>
    <scope>FUNCTION</scope>
</reference>
<reference key="11">
    <citation type="journal article" date="1999" name="Biol. Chem.">
        <title>The Oct-1 POU domain directs developmentally regulated nuclear translocation in Xenopus embryos.</title>
        <authorList>
            <person name="Veenstra G.J."/>
            <person name="Mathu M.T."/>
            <person name="Destree O.H."/>
        </authorList>
    </citation>
    <scope>SUBCELLULAR LOCATION</scope>
    <scope>TISSUE SPECIFICITY</scope>
    <scope>DOMAIN</scope>
</reference>
<reference key="12">
    <citation type="journal article" date="2008" name="Dev. Biol.">
        <title>The POU homeobox protein Oct-1 regulates radial glia formation downstream of Notch signaling.</title>
        <authorList>
            <person name="Kiyota T."/>
            <person name="Kato A."/>
            <person name="Altmann C.R."/>
            <person name="Kato Y."/>
        </authorList>
    </citation>
    <scope>FUNCTION</scope>
    <scope>TISSUE SPECIFICITY</scope>
    <scope>DEVELOPMENTAL STAGE</scope>
    <scope>INDUCTION BY NOTCH1</scope>
</reference>
<dbReference type="EMBL" id="X17190">
    <property type="protein sequence ID" value="CAA35051.1"/>
    <property type="molecule type" value="mRNA"/>
</dbReference>
<dbReference type="EMBL" id="X57165">
    <property type="protein sequence ID" value="CAA40454.1"/>
    <property type="molecule type" value="mRNA"/>
</dbReference>
<dbReference type="EMBL" id="X51819">
    <property type="protein sequence ID" value="CAA36119.1"/>
    <property type="status" value="ALT_SEQ"/>
    <property type="molecule type" value="Genomic_DNA"/>
</dbReference>
<dbReference type="EMBL" id="X54683">
    <property type="protein sequence ID" value="CAA38497.1"/>
    <property type="molecule type" value="mRNA"/>
</dbReference>
<dbReference type="PIR" id="S07896">
    <property type="entry name" value="S07896"/>
</dbReference>
<dbReference type="RefSeq" id="NP_001095255.1">
    <molecule id="P16143-1"/>
    <property type="nucleotide sequence ID" value="NM_001101785.1"/>
</dbReference>
<dbReference type="SMR" id="P16143"/>
<dbReference type="MoonProt" id="P16143"/>
<dbReference type="GeneID" id="399316"/>
<dbReference type="KEGG" id="xla:399316"/>
<dbReference type="AGR" id="Xenbase:XB-GENE-853997"/>
<dbReference type="CTD" id="399316"/>
<dbReference type="Xenbase" id="XB-GENE-853997">
    <property type="gene designation" value="pou2f1.S"/>
</dbReference>
<dbReference type="OrthoDB" id="6358449at2759"/>
<dbReference type="Proteomes" id="UP000186698">
    <property type="component" value="Chromosome 2S"/>
</dbReference>
<dbReference type="Bgee" id="399316">
    <property type="expression patterns" value="Expressed in blastula and 12 other cell types or tissues"/>
</dbReference>
<dbReference type="GO" id="GO:0005737">
    <property type="term" value="C:cytoplasm"/>
    <property type="evidence" value="ECO:0000314"/>
    <property type="project" value="UniProtKB"/>
</dbReference>
<dbReference type="GO" id="GO:0005634">
    <property type="term" value="C:nucleus"/>
    <property type="evidence" value="ECO:0000314"/>
    <property type="project" value="UniProtKB"/>
</dbReference>
<dbReference type="GO" id="GO:0005667">
    <property type="term" value="C:transcription regulator complex"/>
    <property type="evidence" value="ECO:0000250"/>
    <property type="project" value="UniProtKB"/>
</dbReference>
<dbReference type="GO" id="GO:0000981">
    <property type="term" value="F:DNA-binding transcription factor activity, RNA polymerase II-specific"/>
    <property type="evidence" value="ECO:0000318"/>
    <property type="project" value="GO_Central"/>
</dbReference>
<dbReference type="GO" id="GO:0000978">
    <property type="term" value="F:RNA polymerase II cis-regulatory region sequence-specific DNA binding"/>
    <property type="evidence" value="ECO:0000318"/>
    <property type="project" value="GO_Central"/>
</dbReference>
<dbReference type="GO" id="GO:0043565">
    <property type="term" value="F:sequence-specific DNA binding"/>
    <property type="evidence" value="ECO:0000314"/>
    <property type="project" value="UniProtKB"/>
</dbReference>
<dbReference type="GO" id="GO:0007219">
    <property type="term" value="P:Notch signaling pathway"/>
    <property type="evidence" value="ECO:0000315"/>
    <property type="project" value="UniProtKB"/>
</dbReference>
<dbReference type="GO" id="GO:0045893">
    <property type="term" value="P:positive regulation of DNA-templated transcription"/>
    <property type="evidence" value="ECO:0000250"/>
    <property type="project" value="UniProtKB"/>
</dbReference>
<dbReference type="GO" id="GO:0045944">
    <property type="term" value="P:positive regulation of transcription by RNA polymerase II"/>
    <property type="evidence" value="ECO:0000250"/>
    <property type="project" value="UniProtKB"/>
</dbReference>
<dbReference type="GO" id="GO:0060019">
    <property type="term" value="P:radial glial cell differentiation"/>
    <property type="evidence" value="ECO:0000315"/>
    <property type="project" value="UniProtKB"/>
</dbReference>
<dbReference type="GO" id="GO:0042981">
    <property type="term" value="P:regulation of apoptotic process"/>
    <property type="evidence" value="ECO:0000315"/>
    <property type="project" value="UniProtKB"/>
</dbReference>
<dbReference type="GO" id="GO:0006357">
    <property type="term" value="P:regulation of transcription by RNA polymerase II"/>
    <property type="evidence" value="ECO:0000318"/>
    <property type="project" value="GO_Central"/>
</dbReference>
<dbReference type="CDD" id="cd00086">
    <property type="entry name" value="homeodomain"/>
    <property type="match status" value="1"/>
</dbReference>
<dbReference type="FunFam" id="1.10.10.60:FF:000005">
    <property type="entry name" value="POU domain protein"/>
    <property type="match status" value="1"/>
</dbReference>
<dbReference type="FunFam" id="1.10.260.40:FF:000001">
    <property type="entry name" value="POU domain protein"/>
    <property type="match status" value="1"/>
</dbReference>
<dbReference type="Gene3D" id="1.10.10.60">
    <property type="entry name" value="Homeodomain-like"/>
    <property type="match status" value="1"/>
</dbReference>
<dbReference type="Gene3D" id="1.10.260.40">
    <property type="entry name" value="lambda repressor-like DNA-binding domains"/>
    <property type="match status" value="1"/>
</dbReference>
<dbReference type="InterPro" id="IPR001356">
    <property type="entry name" value="HD"/>
</dbReference>
<dbReference type="InterPro" id="IPR017970">
    <property type="entry name" value="Homeobox_CS"/>
</dbReference>
<dbReference type="InterPro" id="IPR009057">
    <property type="entry name" value="Homeodomain-like_sf"/>
</dbReference>
<dbReference type="InterPro" id="IPR010982">
    <property type="entry name" value="Lambda_DNA-bd_dom_sf"/>
</dbReference>
<dbReference type="InterPro" id="IPR013847">
    <property type="entry name" value="POU"/>
</dbReference>
<dbReference type="InterPro" id="IPR045703">
    <property type="entry name" value="POU2F1_C"/>
</dbReference>
<dbReference type="InterPro" id="IPR000327">
    <property type="entry name" value="POU_dom"/>
</dbReference>
<dbReference type="InterPro" id="IPR050255">
    <property type="entry name" value="POU_domain_TF"/>
</dbReference>
<dbReference type="InterPro" id="IPR000972">
    <property type="entry name" value="TF_octamer"/>
</dbReference>
<dbReference type="PANTHER" id="PTHR11636">
    <property type="entry name" value="POU DOMAIN"/>
    <property type="match status" value="1"/>
</dbReference>
<dbReference type="PANTHER" id="PTHR11636:SF47">
    <property type="entry name" value="POU DOMAIN, CLASS 2, TRANSCRIPTION FACTOR 1"/>
    <property type="match status" value="1"/>
</dbReference>
<dbReference type="Pfam" id="PF00046">
    <property type="entry name" value="Homeodomain"/>
    <property type="match status" value="1"/>
</dbReference>
<dbReference type="Pfam" id="PF00157">
    <property type="entry name" value="Pou"/>
    <property type="match status" value="1"/>
</dbReference>
<dbReference type="Pfam" id="PF19536">
    <property type="entry name" value="POU2F1_C"/>
    <property type="match status" value="1"/>
</dbReference>
<dbReference type="PRINTS" id="PR00029">
    <property type="entry name" value="OCTAMER"/>
</dbReference>
<dbReference type="PRINTS" id="PR00028">
    <property type="entry name" value="POUDOMAIN"/>
</dbReference>
<dbReference type="SMART" id="SM00389">
    <property type="entry name" value="HOX"/>
    <property type="match status" value="1"/>
</dbReference>
<dbReference type="SMART" id="SM00352">
    <property type="entry name" value="POU"/>
    <property type="match status" value="1"/>
</dbReference>
<dbReference type="SUPFAM" id="SSF46689">
    <property type="entry name" value="Homeodomain-like"/>
    <property type="match status" value="1"/>
</dbReference>
<dbReference type="SUPFAM" id="SSF47413">
    <property type="entry name" value="lambda repressor-like DNA-binding domains"/>
    <property type="match status" value="1"/>
</dbReference>
<dbReference type="PROSITE" id="PS00027">
    <property type="entry name" value="HOMEOBOX_1"/>
    <property type="match status" value="1"/>
</dbReference>
<dbReference type="PROSITE" id="PS50071">
    <property type="entry name" value="HOMEOBOX_2"/>
    <property type="match status" value="1"/>
</dbReference>
<dbReference type="PROSITE" id="PS00035">
    <property type="entry name" value="POU_1"/>
    <property type="match status" value="1"/>
</dbReference>
<dbReference type="PROSITE" id="PS00465">
    <property type="entry name" value="POU_2"/>
    <property type="match status" value="1"/>
</dbReference>
<dbReference type="PROSITE" id="PS51179">
    <property type="entry name" value="POU_3"/>
    <property type="match status" value="1"/>
</dbReference>
<feature type="chain" id="PRO_0000100713" description="POU domain, class 2, transcription factor 1">
    <location>
        <begin position="1"/>
        <end position="758"/>
    </location>
</feature>
<feature type="domain" description="POU-specific" evidence="2">
    <location>
        <begin position="294"/>
        <end position="368"/>
    </location>
</feature>
<feature type="DNA-binding region" description="Homeobox" evidence="1">
    <location>
        <begin position="395"/>
        <end position="454"/>
    </location>
</feature>
<feature type="region of interest" description="Disordered" evidence="3">
    <location>
        <begin position="1"/>
        <end position="43"/>
    </location>
</feature>
<feature type="region of interest" description="Disordered" evidence="3">
    <location>
        <begin position="271"/>
        <end position="296"/>
    </location>
</feature>
<feature type="region of interest" description="Disordered" evidence="3">
    <location>
        <begin position="377"/>
        <end position="398"/>
    </location>
</feature>
<feature type="region of interest" description="Disordered" evidence="3">
    <location>
        <begin position="450"/>
        <end position="472"/>
    </location>
</feature>
<feature type="region of interest" description="Disordered" evidence="3">
    <location>
        <begin position="534"/>
        <end position="573"/>
    </location>
</feature>
<feature type="compositionally biased region" description="Polar residues" evidence="3">
    <location>
        <begin position="1"/>
        <end position="10"/>
    </location>
</feature>
<feature type="compositionally biased region" description="Polar residues" evidence="3">
    <location>
        <begin position="19"/>
        <end position="30"/>
    </location>
</feature>
<feature type="compositionally biased region" description="Polar residues" evidence="3">
    <location>
        <begin position="275"/>
        <end position="285"/>
    </location>
</feature>
<feature type="compositionally biased region" description="Low complexity" evidence="3">
    <location>
        <begin position="455"/>
        <end position="472"/>
    </location>
</feature>
<feature type="splice variant" id="VSP_038472" description="In isoform 2." evidence="12 13">
    <original>E</original>
    <variation>VLE</variation>
    <location>
        <position position="368"/>
    </location>
</feature>
<feature type="sequence conflict" description="In Ref. 1; CAA35051." evidence="14" ref="1">
    <original>S</original>
    <variation>N</variation>
    <location>
        <position position="157"/>
    </location>
</feature>
<comment type="function">
    <text evidence="5 6 7 8 9 10 11">Transcription factor that binds to the octamer motif (5'-ATTTGCAT-3') and activates the promoters of the genes of some small nuclear RNAs (snRNA) and histone H2B (PubMed:2017364). In vitro does not bind to variant octamer sequences, such as the H2B octamer 5'-GTTTGCAT-3', although binding has been observed in vivo during early embryogenesis, suggesting that interactions between pou2f1 and other factors might be required for octamer-dependent H2B transcription (PubMed:1406629, PubMed:1990276, PubMed:2017364). Acts downstream of Notch signaling during radial glia formation (PubMed:18241856). May be important for gastrulation, possibly through the regulation of an FGF-type signaling pathway (PubMed:7542467).</text>
</comment>
<comment type="subcellular location">
    <subcellularLocation>
        <location evidence="10">Cytoplasm</location>
    </subcellularLocation>
    <subcellularLocation>
        <location evidence="10 11">Nucleus</location>
    </subcellularLocation>
    <text>Retained in the cytoplasm during early development, then gradually translocates to the nucleus around the mid-blastula transition (MBT).</text>
</comment>
<comment type="alternative products">
    <event type="alternative splicing"/>
    <isoform>
        <id>P16143-1</id>
        <name>1</name>
        <sequence type="displayed"/>
    </isoform>
    <isoform>
        <id>P16143-2</id>
        <name>2</name>
        <sequence type="described" ref="VSP_038472"/>
    </isoform>
</comment>
<comment type="tissue specificity">
    <text evidence="8 10 11">Expressed in oocytes (at protein level) (PubMed:2017364). Expressed in the tadpole brain (at protein level) (PubMed:18241856, PubMed:7542467).</text>
</comment>
<comment type="developmental stage">
    <text evidence="4 7 8 11">Expressed both maternally and zygotically. Abundant in the animal hemisphere of the blastula embryo and during early embryogenesis. Expressed in ectodermal and mesodermal cell lineages where expression becomes spatially restricted to the developing nervous system as development progresses (at protein level). Expressed in the neural plate at late neurula stage (stage 17). At early tailbud stage (stage 25), expression continues in the neural tube and begins in the eyes. At late tailbud stages (stage 30), expressed broadly in the CNS (PubMed:18241856, PubMed:7542467).</text>
</comment>
<comment type="induction">
    <text evidence="8">Up-regulated by notch1.</text>
</comment>
<comment type="domain">
    <text evidence="4">The POU domain controls nuclear translocation.</text>
</comment>
<comment type="similarity">
    <text evidence="14">Belongs to the POU transcription factor family. Class-2 subfamily.</text>
</comment>
<comment type="sequence caution" evidence="14">
    <conflict type="miscellaneous discrepancy">
        <sequence resource="EMBL-CDS" id="CAA36119"/>
    </conflict>
    <text>Unidentified sequence at N-terminus.</text>
</comment>
<accession>P16143</accession>
<accession>Q01236</accession>
<accession>Q91809</accession>
<gene>
    <name type="primary">pou2f1</name>
    <name type="synonym">oct-1</name>
    <name type="synonym">oct1</name>
    <name type="synonym">oct1.32</name>
</gene>
<proteinExistence type="evidence at protein level"/>
<sequence>MKLHSSSKIQNHAWLSDARMNNPSETSKSPESGDGNTGTQTNGLDFQKQAVPIGAITSAQAQALLGHLHQVQLAGTSLQAAAHSLNVQTKFKEEPGEPMQVVQPSQQPSLQAAIPQTQLMVAGGQIAGLTLTPAQQQMLLQQAQAQLLAAAVQHSASQQHNAAGATISASAATPMTQIPLSQPIQIAQDLQQLQQLQQQNLNLQQYVLVHPTTNLQSAQFIISQTPQGQQGLLQAQNLLTQLPQQSQANLLQSQPSITLTSQPATPTRTIAATPVQQLPQSQTTPKRIDTPSLEEPSDLEELEQFAKTFKQRRIKLGFTQGDVGLAMGKLYGNDFSQTTISRFEALNLSFKNMCKLKPLLEKWLNDAENITSDSTLTNQSVLNSPGHGMEGLNRRRKKRTSIETNIRVALEKSFLENQKPTSEEITMIADQLNMEKEVIRVWFCNRRQKEKRINPPSSGGSSSSPIKSLFSSPNPLVASTPSLVTSSPATTLTVNPVLPLTSAAAITSFHIPGTTGTSSANTATVISTAPPVSSVLTSPSLSSSPSATAASSEASTAGETSTTQTTSTPMTSSLNTGQVMVTASGIHTAAATALQGAAQLPTNASLAAMAAAAGLNPGLMAPSQFAAGGALFSLNPGALGSALSPALMSNSTLATIQALASSGSLPITSLDAAGNLVFANAGGTPNIVTAPLFLNPQNLSLFTSNPVSLISAASAGATGPITSLHATTSSIDSIQNALFTMASASGAASTTTSASKAQ</sequence>
<evidence type="ECO:0000255" key="1">
    <source>
        <dbReference type="PROSITE-ProRule" id="PRU00108"/>
    </source>
</evidence>
<evidence type="ECO:0000255" key="2">
    <source>
        <dbReference type="PROSITE-ProRule" id="PRU00530"/>
    </source>
</evidence>
<evidence type="ECO:0000256" key="3">
    <source>
        <dbReference type="SAM" id="MobiDB-lite"/>
    </source>
</evidence>
<evidence type="ECO:0000269" key="4">
    <source>
    </source>
</evidence>
<evidence type="ECO:0000269" key="5">
    <source>
    </source>
</evidence>
<evidence type="ECO:0000269" key="6">
    <source>
    </source>
</evidence>
<evidence type="ECO:0000269" key="7">
    <source>
    </source>
</evidence>
<evidence type="ECO:0000269" key="8">
    <source>
    </source>
</evidence>
<evidence type="ECO:0000269" key="9">
    <source>
    </source>
</evidence>
<evidence type="ECO:0000269" key="10">
    <source>
    </source>
</evidence>
<evidence type="ECO:0000269" key="11">
    <source>
    </source>
</evidence>
<evidence type="ECO:0000303" key="12">
    <source>
    </source>
</evidence>
<evidence type="ECO:0000303" key="13">
    <source>
    </source>
</evidence>
<evidence type="ECO:0000305" key="14"/>
<protein>
    <recommendedName>
        <fullName>POU domain, class 2, transcription factor 1</fullName>
    </recommendedName>
    <alternativeName>
        <fullName>Octamer-binding protein 1</fullName>
        <shortName>Oct-1</shortName>
        <shortName>XOct1</shortName>
    </alternativeName>
    <alternativeName>
        <fullName>Octamer-binding transcription factor 1</fullName>
        <shortName>OTF-1</shortName>
    </alternativeName>
    <alternativeName>
        <fullName>Xloct1-32</fullName>
    </alternativeName>
</protein>
<organism>
    <name type="scientific">Xenopus laevis</name>
    <name type="common">African clawed frog</name>
    <dbReference type="NCBI Taxonomy" id="8355"/>
    <lineage>
        <taxon>Eukaryota</taxon>
        <taxon>Metazoa</taxon>
        <taxon>Chordata</taxon>
        <taxon>Craniata</taxon>
        <taxon>Vertebrata</taxon>
        <taxon>Euteleostomi</taxon>
        <taxon>Amphibia</taxon>
        <taxon>Batrachia</taxon>
        <taxon>Anura</taxon>
        <taxon>Pipoidea</taxon>
        <taxon>Pipidae</taxon>
        <taxon>Xenopodinae</taxon>
        <taxon>Xenopus</taxon>
        <taxon>Xenopus</taxon>
    </lineage>
</organism>
<name>PO2F1_XENLA</name>
<keyword id="KW-0010">Activator</keyword>
<keyword id="KW-0025">Alternative splicing</keyword>
<keyword id="KW-0963">Cytoplasm</keyword>
<keyword id="KW-0217">Developmental protein</keyword>
<keyword id="KW-0238">DNA-binding</keyword>
<keyword id="KW-0371">Homeobox</keyword>
<keyword id="KW-0539">Nucleus</keyword>
<keyword id="KW-1185">Reference proteome</keyword>
<keyword id="KW-0804">Transcription</keyword>
<keyword id="KW-0805">Transcription regulation</keyword>